<protein>
    <recommendedName>
        <fullName>Anti-lipopolysaccharide factor</fullName>
        <shortName>anti-LPS</shortName>
    </recommendedName>
</protein>
<feature type="chain" id="PRO_0000064573" description="Anti-lipopolysaccharide factor">
    <location>
        <begin position="1"/>
        <end position="102"/>
    </location>
</feature>
<feature type="disulfide bond">
    <location>
        <begin position="32"/>
        <end position="53"/>
    </location>
</feature>
<feature type="sequence variant">
    <original>V</original>
    <variation>I</variation>
    <location>
        <position position="36"/>
    </location>
</feature>
<feature type="sequence variant">
    <original>E</original>
    <variation>Q</variation>
    <location>
        <position position="102"/>
    </location>
</feature>
<accession>P07087</accession>
<sequence>EGGIWTQLALALVKNLATLWQSGDFQFLGHECHYRVNPTVKRLKWKYKGKFWCPSWTSITGRATKSSRSGAVEHSVRDFVSQAKSSGLITEKEAQTFISQYE</sequence>
<organism>
    <name type="scientific">Tachypleus tridentatus</name>
    <name type="common">Japanese horseshoe crab</name>
    <dbReference type="NCBI Taxonomy" id="6853"/>
    <lineage>
        <taxon>Eukaryota</taxon>
        <taxon>Metazoa</taxon>
        <taxon>Ecdysozoa</taxon>
        <taxon>Arthropoda</taxon>
        <taxon>Chelicerata</taxon>
        <taxon>Merostomata</taxon>
        <taxon>Xiphosura</taxon>
        <taxon>Limulidae</taxon>
        <taxon>Tachypleus</taxon>
    </lineage>
</organism>
<keyword id="KW-0044">Antibiotic</keyword>
<keyword id="KW-0929">Antimicrobial</keyword>
<keyword id="KW-0903">Direct protein sequencing</keyword>
<keyword id="KW-1015">Disulfide bond</keyword>
<dbReference type="PIR" id="A23931">
    <property type="entry name" value="A23931"/>
</dbReference>
<dbReference type="SMR" id="P07087"/>
<dbReference type="GO" id="GO:0042742">
    <property type="term" value="P:defense response to bacterium"/>
    <property type="evidence" value="ECO:0007669"/>
    <property type="project" value="UniProtKB-KW"/>
</dbReference>
<dbReference type="Gene3D" id="3.30.160.320">
    <property type="match status" value="1"/>
</dbReference>
<dbReference type="InterPro" id="IPR024509">
    <property type="entry name" value="Anti-LPS_factor/Scygonadin"/>
</dbReference>
<dbReference type="InterPro" id="IPR038539">
    <property type="entry name" value="Anti-LPS_factor/Scygonadin_sf"/>
</dbReference>
<dbReference type="Pfam" id="PF11630">
    <property type="entry name" value="Anti-LPS-SCYG"/>
    <property type="match status" value="1"/>
</dbReference>
<reference key="1">
    <citation type="journal article" date="1986" name="J. Biol. Chem.">
        <title>Primary structure of limulus anticoagulant anti-lipopolysaccharide factor.</title>
        <authorList>
            <person name="Aketagawa J."/>
            <person name="Miyata T."/>
            <person name="Ohtsubo S."/>
            <person name="Nakamura T."/>
            <person name="Morita T."/>
            <person name="Hayashida H."/>
            <person name="Iwanaga S."/>
            <person name="Takao T."/>
            <person name="Shimonishi Y."/>
        </authorList>
    </citation>
    <scope>PROTEIN SEQUENCE</scope>
</reference>
<proteinExistence type="evidence at protein level"/>
<name>ALPS_TACTR</name>
<comment type="function">
    <text>Binds tightly to LPS and thus specifically inhibits the LPS-mediated activation of the hemolymph coagulation. It has a strong antibacterial effect especially on the growth of Gram-negative bacteria.</text>
</comment>